<evidence type="ECO:0000255" key="1">
    <source>
        <dbReference type="HAMAP-Rule" id="MF_00160"/>
    </source>
</evidence>
<sequence>MAQVYNFSSGPAMLPADVLRVAQEELRDWQGLGTSVMEISHRSKEFIQVAEQAEQDFRDLLEIPSNYKVLFCHGGGRGQFSALPLNLLGNKTTADYVDGGYWAASAVKEAKKYLTPNVIDAKITVDGKRAIKPMSEWQLSADAAYVHYCPNETIDGIAINDTPDFGDAIVTADFSSTILSHPIDVSRYGVIYAGAQKNIGPAGLTLVIVREDLLGKAHVSCPSVLDYSVLSENDSMFNTPPTFAWYLAGLVFKWLKTNGGVAAMDKINQQKADLLYGVIDNSDFYRNDVATANRSRMNVPFQLADSSLDKLFLEESFAAGLHALKGHRVVGGMRASIYNAMPLEGVKALTDFMVDFERRHG</sequence>
<organism>
    <name type="scientific">Cronobacter sakazakii (strain ATCC BAA-894)</name>
    <name type="common">Enterobacter sakazakii</name>
    <dbReference type="NCBI Taxonomy" id="290339"/>
    <lineage>
        <taxon>Bacteria</taxon>
        <taxon>Pseudomonadati</taxon>
        <taxon>Pseudomonadota</taxon>
        <taxon>Gammaproteobacteria</taxon>
        <taxon>Enterobacterales</taxon>
        <taxon>Enterobacteriaceae</taxon>
        <taxon>Cronobacter</taxon>
    </lineage>
</organism>
<accession>A7MES8</accession>
<proteinExistence type="inferred from homology"/>
<protein>
    <recommendedName>
        <fullName evidence="1">Phosphoserine aminotransferase</fullName>
        <ecNumber evidence="1">2.6.1.52</ecNumber>
    </recommendedName>
    <alternativeName>
        <fullName evidence="1">Phosphohydroxythreonine aminotransferase</fullName>
        <shortName evidence="1">PSAT</shortName>
    </alternativeName>
</protein>
<name>SERC_CROS8</name>
<reference key="1">
    <citation type="journal article" date="2010" name="PLoS ONE">
        <title>Genome sequence of Cronobacter sakazakii BAA-894 and comparative genomic hybridization analysis with other Cronobacter species.</title>
        <authorList>
            <person name="Kucerova E."/>
            <person name="Clifton S.W."/>
            <person name="Xia X.Q."/>
            <person name="Long F."/>
            <person name="Porwollik S."/>
            <person name="Fulton L."/>
            <person name="Fronick C."/>
            <person name="Minx P."/>
            <person name="Kyung K."/>
            <person name="Warren W."/>
            <person name="Fulton R."/>
            <person name="Feng D."/>
            <person name="Wollam A."/>
            <person name="Shah N."/>
            <person name="Bhonagiri V."/>
            <person name="Nash W.E."/>
            <person name="Hallsworth-Pepin K."/>
            <person name="Wilson R.K."/>
            <person name="McClelland M."/>
            <person name="Forsythe S.J."/>
        </authorList>
    </citation>
    <scope>NUCLEOTIDE SEQUENCE [LARGE SCALE GENOMIC DNA]</scope>
    <source>
        <strain>ATCC BAA-894</strain>
    </source>
</reference>
<dbReference type="EC" id="2.6.1.52" evidence="1"/>
<dbReference type="EMBL" id="CP000783">
    <property type="protein sequence ID" value="ABU77683.1"/>
    <property type="molecule type" value="Genomic_DNA"/>
</dbReference>
<dbReference type="RefSeq" id="WP_007866472.1">
    <property type="nucleotide sequence ID" value="NC_009778.1"/>
</dbReference>
<dbReference type="SMR" id="A7MES8"/>
<dbReference type="KEGG" id="esa:ESA_02437"/>
<dbReference type="HOGENOM" id="CLU_034866_0_2_6"/>
<dbReference type="UniPathway" id="UPA00135">
    <property type="reaction ID" value="UER00197"/>
</dbReference>
<dbReference type="UniPathway" id="UPA00244">
    <property type="reaction ID" value="UER00311"/>
</dbReference>
<dbReference type="Proteomes" id="UP000000260">
    <property type="component" value="Chromosome"/>
</dbReference>
<dbReference type="GO" id="GO:0005737">
    <property type="term" value="C:cytoplasm"/>
    <property type="evidence" value="ECO:0007669"/>
    <property type="project" value="UniProtKB-SubCell"/>
</dbReference>
<dbReference type="GO" id="GO:0004648">
    <property type="term" value="F:O-phospho-L-serine:2-oxoglutarate aminotransferase activity"/>
    <property type="evidence" value="ECO:0007669"/>
    <property type="project" value="UniProtKB-UniRule"/>
</dbReference>
<dbReference type="GO" id="GO:0030170">
    <property type="term" value="F:pyridoxal phosphate binding"/>
    <property type="evidence" value="ECO:0007669"/>
    <property type="project" value="UniProtKB-UniRule"/>
</dbReference>
<dbReference type="GO" id="GO:0006564">
    <property type="term" value="P:L-serine biosynthetic process"/>
    <property type="evidence" value="ECO:0007669"/>
    <property type="project" value="UniProtKB-UniRule"/>
</dbReference>
<dbReference type="GO" id="GO:0008615">
    <property type="term" value="P:pyridoxine biosynthetic process"/>
    <property type="evidence" value="ECO:0007669"/>
    <property type="project" value="UniProtKB-UniRule"/>
</dbReference>
<dbReference type="CDD" id="cd00611">
    <property type="entry name" value="PSAT_like"/>
    <property type="match status" value="1"/>
</dbReference>
<dbReference type="FunFam" id="3.40.640.10:FF:000010">
    <property type="entry name" value="Phosphoserine aminotransferase"/>
    <property type="match status" value="1"/>
</dbReference>
<dbReference type="FunFam" id="3.90.1150.10:FF:000006">
    <property type="entry name" value="Phosphoserine aminotransferase"/>
    <property type="match status" value="1"/>
</dbReference>
<dbReference type="Gene3D" id="3.90.1150.10">
    <property type="entry name" value="Aspartate Aminotransferase, domain 1"/>
    <property type="match status" value="1"/>
</dbReference>
<dbReference type="Gene3D" id="3.40.640.10">
    <property type="entry name" value="Type I PLP-dependent aspartate aminotransferase-like (Major domain)"/>
    <property type="match status" value="1"/>
</dbReference>
<dbReference type="HAMAP" id="MF_00160">
    <property type="entry name" value="SerC_aminotrans_5"/>
    <property type="match status" value="1"/>
</dbReference>
<dbReference type="InterPro" id="IPR000192">
    <property type="entry name" value="Aminotrans_V_dom"/>
</dbReference>
<dbReference type="InterPro" id="IPR020578">
    <property type="entry name" value="Aminotrans_V_PyrdxlP_BS"/>
</dbReference>
<dbReference type="InterPro" id="IPR022278">
    <property type="entry name" value="Pser_aminoTfrase"/>
</dbReference>
<dbReference type="InterPro" id="IPR015424">
    <property type="entry name" value="PyrdxlP-dep_Trfase"/>
</dbReference>
<dbReference type="InterPro" id="IPR015421">
    <property type="entry name" value="PyrdxlP-dep_Trfase_major"/>
</dbReference>
<dbReference type="InterPro" id="IPR015422">
    <property type="entry name" value="PyrdxlP-dep_Trfase_small"/>
</dbReference>
<dbReference type="NCBIfam" id="NF003764">
    <property type="entry name" value="PRK05355.1"/>
    <property type="match status" value="1"/>
</dbReference>
<dbReference type="NCBIfam" id="TIGR01364">
    <property type="entry name" value="serC_1"/>
    <property type="match status" value="1"/>
</dbReference>
<dbReference type="PANTHER" id="PTHR43247">
    <property type="entry name" value="PHOSPHOSERINE AMINOTRANSFERASE"/>
    <property type="match status" value="1"/>
</dbReference>
<dbReference type="PANTHER" id="PTHR43247:SF1">
    <property type="entry name" value="PHOSPHOSERINE AMINOTRANSFERASE"/>
    <property type="match status" value="1"/>
</dbReference>
<dbReference type="Pfam" id="PF00266">
    <property type="entry name" value="Aminotran_5"/>
    <property type="match status" value="1"/>
</dbReference>
<dbReference type="PIRSF" id="PIRSF000525">
    <property type="entry name" value="SerC"/>
    <property type="match status" value="1"/>
</dbReference>
<dbReference type="SUPFAM" id="SSF53383">
    <property type="entry name" value="PLP-dependent transferases"/>
    <property type="match status" value="1"/>
</dbReference>
<dbReference type="PROSITE" id="PS00595">
    <property type="entry name" value="AA_TRANSFER_CLASS_5"/>
    <property type="match status" value="1"/>
</dbReference>
<gene>
    <name evidence="1" type="primary">serC</name>
    <name type="ordered locus">ESA_02437</name>
</gene>
<feature type="chain" id="PRO_1000203537" description="Phosphoserine aminotransferase">
    <location>
        <begin position="1"/>
        <end position="361"/>
    </location>
</feature>
<feature type="binding site" evidence="1">
    <location>
        <position position="9"/>
    </location>
    <ligand>
        <name>L-glutamate</name>
        <dbReference type="ChEBI" id="CHEBI:29985"/>
    </ligand>
</feature>
<feature type="binding site" evidence="1">
    <location>
        <position position="42"/>
    </location>
    <ligand>
        <name>L-glutamate</name>
        <dbReference type="ChEBI" id="CHEBI:29985"/>
    </ligand>
</feature>
<feature type="binding site" evidence="1">
    <location>
        <begin position="76"/>
        <end position="77"/>
    </location>
    <ligand>
        <name>pyridoxal 5'-phosphate</name>
        <dbReference type="ChEBI" id="CHEBI:597326"/>
    </ligand>
</feature>
<feature type="binding site" evidence="1">
    <location>
        <position position="102"/>
    </location>
    <ligand>
        <name>pyridoxal 5'-phosphate</name>
        <dbReference type="ChEBI" id="CHEBI:597326"/>
    </ligand>
</feature>
<feature type="binding site" evidence="1">
    <location>
        <position position="153"/>
    </location>
    <ligand>
        <name>pyridoxal 5'-phosphate</name>
        <dbReference type="ChEBI" id="CHEBI:597326"/>
    </ligand>
</feature>
<feature type="binding site" evidence="1">
    <location>
        <position position="173"/>
    </location>
    <ligand>
        <name>pyridoxal 5'-phosphate</name>
        <dbReference type="ChEBI" id="CHEBI:597326"/>
    </ligand>
</feature>
<feature type="binding site" evidence="1">
    <location>
        <position position="196"/>
    </location>
    <ligand>
        <name>pyridoxal 5'-phosphate</name>
        <dbReference type="ChEBI" id="CHEBI:597326"/>
    </ligand>
</feature>
<feature type="binding site" evidence="1">
    <location>
        <begin position="238"/>
        <end position="239"/>
    </location>
    <ligand>
        <name>pyridoxal 5'-phosphate</name>
        <dbReference type="ChEBI" id="CHEBI:597326"/>
    </ligand>
</feature>
<feature type="modified residue" description="N6-(pyridoxal phosphate)lysine" evidence="1">
    <location>
        <position position="197"/>
    </location>
</feature>
<keyword id="KW-0028">Amino-acid biosynthesis</keyword>
<keyword id="KW-0032">Aminotransferase</keyword>
<keyword id="KW-0963">Cytoplasm</keyword>
<keyword id="KW-0663">Pyridoxal phosphate</keyword>
<keyword id="KW-0664">Pyridoxine biosynthesis</keyword>
<keyword id="KW-1185">Reference proteome</keyword>
<keyword id="KW-0718">Serine biosynthesis</keyword>
<keyword id="KW-0808">Transferase</keyword>
<comment type="function">
    <text evidence="1">Catalyzes the reversible conversion of 3-phosphohydroxypyruvate to phosphoserine and of 3-hydroxy-2-oxo-4-phosphonooxybutanoate to phosphohydroxythreonine.</text>
</comment>
<comment type="catalytic activity">
    <reaction evidence="1">
        <text>O-phospho-L-serine + 2-oxoglutarate = 3-phosphooxypyruvate + L-glutamate</text>
        <dbReference type="Rhea" id="RHEA:14329"/>
        <dbReference type="ChEBI" id="CHEBI:16810"/>
        <dbReference type="ChEBI" id="CHEBI:18110"/>
        <dbReference type="ChEBI" id="CHEBI:29985"/>
        <dbReference type="ChEBI" id="CHEBI:57524"/>
        <dbReference type="EC" id="2.6.1.52"/>
    </reaction>
</comment>
<comment type="catalytic activity">
    <reaction evidence="1">
        <text>4-(phosphooxy)-L-threonine + 2-oxoglutarate = (R)-3-hydroxy-2-oxo-4-phosphooxybutanoate + L-glutamate</text>
        <dbReference type="Rhea" id="RHEA:16573"/>
        <dbReference type="ChEBI" id="CHEBI:16810"/>
        <dbReference type="ChEBI" id="CHEBI:29985"/>
        <dbReference type="ChEBI" id="CHEBI:58452"/>
        <dbReference type="ChEBI" id="CHEBI:58538"/>
        <dbReference type="EC" id="2.6.1.52"/>
    </reaction>
</comment>
<comment type="cofactor">
    <cofactor evidence="1">
        <name>pyridoxal 5'-phosphate</name>
        <dbReference type="ChEBI" id="CHEBI:597326"/>
    </cofactor>
    <text evidence="1">Binds 1 pyridoxal phosphate per subunit.</text>
</comment>
<comment type="pathway">
    <text evidence="1">Amino-acid biosynthesis; L-serine biosynthesis; L-serine from 3-phospho-D-glycerate: step 2/3.</text>
</comment>
<comment type="pathway">
    <text evidence="1">Cofactor biosynthesis; pyridoxine 5'-phosphate biosynthesis; pyridoxine 5'-phosphate from D-erythrose 4-phosphate: step 3/5.</text>
</comment>
<comment type="subunit">
    <text evidence="1">Homodimer.</text>
</comment>
<comment type="subcellular location">
    <subcellularLocation>
        <location evidence="1">Cytoplasm</location>
    </subcellularLocation>
</comment>
<comment type="similarity">
    <text evidence="1">Belongs to the class-V pyridoxal-phosphate-dependent aminotransferase family. SerC subfamily.</text>
</comment>